<proteinExistence type="inferred from homology"/>
<organism>
    <name type="scientific">Ehrlichia ruminantium (strain Welgevonden)</name>
    <dbReference type="NCBI Taxonomy" id="254945"/>
    <lineage>
        <taxon>Bacteria</taxon>
        <taxon>Pseudomonadati</taxon>
        <taxon>Pseudomonadota</taxon>
        <taxon>Alphaproteobacteria</taxon>
        <taxon>Rickettsiales</taxon>
        <taxon>Anaplasmataceae</taxon>
        <taxon>Ehrlichia</taxon>
    </lineage>
</organism>
<sequence length="887" mass="100901">MIKHNLVSDLRRLFIDFFVKNGHQFFPSSQLVIKDDPSLLFTNAGMVQFKQRFTSVDDRSINTAVSSQKCLRVGGKHNDLENVGHTNRHHTFFEMLGNFSFGSYFKERAIELAWDFVTKELALDKKRLYITVYHDDQDAFNLWKKISSFSDDKIIKIKTNDNFWSMGNVGPCGPCSEIFYDYGESVKGGLPGTPEEDGARFTEIWNLVFMEYNRTEEGELSVLPRKCIDTGMGLERIAAVMQGVHDNYDINLFKALIAMSKKESGNSSCEIAHRVIADHVRSAAFLIAEGLTPGNEGRDYILRRIIRRAARYVYMLKYTDSLMYKIFPVLIDETSNAYMADYYPELFKAKDLIISILKTEEENFKDTLVRALPLLEKELTYLSTGDVLSGDIIFRLYDTYGFPVDITLDIIKERGIRFDEKGFYDNMEQQKTRSRLSHLIKSTEQLNGKIWEDIRQNYNNTRFVGYDNFQVQSKILSMVMNNDRNVTVANVGDKVSILMDITPFYAEAGGQQADTGLLSVVRRDGKDLFGSSNIADVTNTKNIFDGLYIHECIVKSGSLIIGDIVSAEINSHRRKDLCANHSATHLLHYILRMEIDNNIMQKGSLVGNDKLRFDFSYNMALTEKQIKLIENRMCDLIRQNHPVETNICNLQNAMDNGAIALFTEKYDNHEVRVVNIGNSKELCCGTHVKYTGEIGCFKIISESSIACGIRRIEAVTGQYAIDYFRQQEKVLYQVAESVKSPVEDVLVQIDKINRENQELKQKLWAAYFDIIDMQGVNIEKIGNINFLHGTLSSVPIDVVRKFIMKRLVKDMIMLFSNVVNHNKIYVVGVGNSLHSKVKAADFVKIIGCVVKSKGGGNAQLAQISTEYIAEVDVIQHIKDELVSIFNA</sequence>
<dbReference type="EC" id="6.1.1.7" evidence="1"/>
<dbReference type="EMBL" id="CR767821">
    <property type="protein sequence ID" value="CAH57866.1"/>
    <property type="molecule type" value="Genomic_DNA"/>
</dbReference>
<dbReference type="EMBL" id="CR925678">
    <property type="protein sequence ID" value="CAI26640.1"/>
    <property type="molecule type" value="Genomic_DNA"/>
</dbReference>
<dbReference type="RefSeq" id="WP_011154834.1">
    <property type="nucleotide sequence ID" value="NC_005295.2"/>
</dbReference>
<dbReference type="SMR" id="Q5HC27"/>
<dbReference type="GeneID" id="33057907"/>
<dbReference type="KEGG" id="eru:Erum1500"/>
<dbReference type="KEGG" id="erw:ERWE_CDS_01460"/>
<dbReference type="eggNOG" id="COG0013">
    <property type="taxonomic scope" value="Bacteria"/>
</dbReference>
<dbReference type="HOGENOM" id="CLU_004485_1_1_5"/>
<dbReference type="Proteomes" id="UP000001021">
    <property type="component" value="Chromosome"/>
</dbReference>
<dbReference type="GO" id="GO:0005829">
    <property type="term" value="C:cytosol"/>
    <property type="evidence" value="ECO:0007669"/>
    <property type="project" value="TreeGrafter"/>
</dbReference>
<dbReference type="GO" id="GO:0004813">
    <property type="term" value="F:alanine-tRNA ligase activity"/>
    <property type="evidence" value="ECO:0007669"/>
    <property type="project" value="UniProtKB-UniRule"/>
</dbReference>
<dbReference type="GO" id="GO:0002161">
    <property type="term" value="F:aminoacyl-tRNA deacylase activity"/>
    <property type="evidence" value="ECO:0007669"/>
    <property type="project" value="TreeGrafter"/>
</dbReference>
<dbReference type="GO" id="GO:0005524">
    <property type="term" value="F:ATP binding"/>
    <property type="evidence" value="ECO:0007669"/>
    <property type="project" value="UniProtKB-UniRule"/>
</dbReference>
<dbReference type="GO" id="GO:0000049">
    <property type="term" value="F:tRNA binding"/>
    <property type="evidence" value="ECO:0007669"/>
    <property type="project" value="UniProtKB-KW"/>
</dbReference>
<dbReference type="GO" id="GO:0008270">
    <property type="term" value="F:zinc ion binding"/>
    <property type="evidence" value="ECO:0007669"/>
    <property type="project" value="UniProtKB-UniRule"/>
</dbReference>
<dbReference type="GO" id="GO:0006419">
    <property type="term" value="P:alanyl-tRNA aminoacylation"/>
    <property type="evidence" value="ECO:0007669"/>
    <property type="project" value="UniProtKB-UniRule"/>
</dbReference>
<dbReference type="GO" id="GO:0045892">
    <property type="term" value="P:negative regulation of DNA-templated transcription"/>
    <property type="evidence" value="ECO:0007669"/>
    <property type="project" value="TreeGrafter"/>
</dbReference>
<dbReference type="CDD" id="cd00673">
    <property type="entry name" value="AlaRS_core"/>
    <property type="match status" value="1"/>
</dbReference>
<dbReference type="FunFam" id="3.30.930.10:FF:000004">
    <property type="entry name" value="Alanine--tRNA ligase"/>
    <property type="match status" value="1"/>
</dbReference>
<dbReference type="FunFam" id="3.30.980.10:FF:000004">
    <property type="entry name" value="Alanine--tRNA ligase, cytoplasmic"/>
    <property type="match status" value="1"/>
</dbReference>
<dbReference type="Gene3D" id="2.40.30.130">
    <property type="match status" value="1"/>
</dbReference>
<dbReference type="Gene3D" id="3.10.310.40">
    <property type="match status" value="1"/>
</dbReference>
<dbReference type="Gene3D" id="3.30.54.20">
    <property type="match status" value="1"/>
</dbReference>
<dbReference type="Gene3D" id="3.30.930.10">
    <property type="entry name" value="Bira Bifunctional Protein, Domain 2"/>
    <property type="match status" value="1"/>
</dbReference>
<dbReference type="Gene3D" id="3.30.980.10">
    <property type="entry name" value="Threonyl-trna Synthetase, Chain A, domain 2"/>
    <property type="match status" value="1"/>
</dbReference>
<dbReference type="HAMAP" id="MF_00036_B">
    <property type="entry name" value="Ala_tRNA_synth_B"/>
    <property type="match status" value="1"/>
</dbReference>
<dbReference type="InterPro" id="IPR045864">
    <property type="entry name" value="aa-tRNA-synth_II/BPL/LPL"/>
</dbReference>
<dbReference type="InterPro" id="IPR002318">
    <property type="entry name" value="Ala-tRNA-lgiase_IIc"/>
</dbReference>
<dbReference type="InterPro" id="IPR018162">
    <property type="entry name" value="Ala-tRNA-ligase_IIc_anticod-bd"/>
</dbReference>
<dbReference type="InterPro" id="IPR018165">
    <property type="entry name" value="Ala-tRNA-synth_IIc_core"/>
</dbReference>
<dbReference type="InterPro" id="IPR018164">
    <property type="entry name" value="Ala-tRNA-synth_IIc_N"/>
</dbReference>
<dbReference type="InterPro" id="IPR050058">
    <property type="entry name" value="Ala-tRNA_ligase"/>
</dbReference>
<dbReference type="InterPro" id="IPR023033">
    <property type="entry name" value="Ala_tRNA_ligase_euk/bac"/>
</dbReference>
<dbReference type="InterPro" id="IPR018163">
    <property type="entry name" value="Thr/Ala-tRNA-synth_IIc_edit"/>
</dbReference>
<dbReference type="InterPro" id="IPR009000">
    <property type="entry name" value="Transl_B-barrel_sf"/>
</dbReference>
<dbReference type="InterPro" id="IPR012947">
    <property type="entry name" value="tRNA_SAD"/>
</dbReference>
<dbReference type="NCBIfam" id="TIGR00344">
    <property type="entry name" value="alaS"/>
    <property type="match status" value="1"/>
</dbReference>
<dbReference type="PANTHER" id="PTHR11777:SF9">
    <property type="entry name" value="ALANINE--TRNA LIGASE, CYTOPLASMIC"/>
    <property type="match status" value="1"/>
</dbReference>
<dbReference type="PANTHER" id="PTHR11777">
    <property type="entry name" value="ALANYL-TRNA SYNTHETASE"/>
    <property type="match status" value="1"/>
</dbReference>
<dbReference type="Pfam" id="PF01411">
    <property type="entry name" value="tRNA-synt_2c"/>
    <property type="match status" value="1"/>
</dbReference>
<dbReference type="Pfam" id="PF07973">
    <property type="entry name" value="tRNA_SAD"/>
    <property type="match status" value="1"/>
</dbReference>
<dbReference type="PRINTS" id="PR00980">
    <property type="entry name" value="TRNASYNTHALA"/>
</dbReference>
<dbReference type="SMART" id="SM00863">
    <property type="entry name" value="tRNA_SAD"/>
    <property type="match status" value="1"/>
</dbReference>
<dbReference type="SUPFAM" id="SSF55681">
    <property type="entry name" value="Class II aaRS and biotin synthetases"/>
    <property type="match status" value="1"/>
</dbReference>
<dbReference type="SUPFAM" id="SSF101353">
    <property type="entry name" value="Putative anticodon-binding domain of alanyl-tRNA synthetase (AlaRS)"/>
    <property type="match status" value="1"/>
</dbReference>
<dbReference type="SUPFAM" id="SSF55186">
    <property type="entry name" value="ThrRS/AlaRS common domain"/>
    <property type="match status" value="1"/>
</dbReference>
<dbReference type="SUPFAM" id="SSF50447">
    <property type="entry name" value="Translation proteins"/>
    <property type="match status" value="1"/>
</dbReference>
<dbReference type="PROSITE" id="PS50860">
    <property type="entry name" value="AA_TRNA_LIGASE_II_ALA"/>
    <property type="match status" value="1"/>
</dbReference>
<name>SYA_EHRRW</name>
<feature type="chain" id="PRO_0000075110" description="Alanine--tRNA ligase">
    <location>
        <begin position="1"/>
        <end position="887"/>
    </location>
</feature>
<feature type="binding site" evidence="1">
    <location>
        <position position="581"/>
    </location>
    <ligand>
        <name>Zn(2+)</name>
        <dbReference type="ChEBI" id="CHEBI:29105"/>
    </ligand>
</feature>
<feature type="binding site" evidence="1">
    <location>
        <position position="585"/>
    </location>
    <ligand>
        <name>Zn(2+)</name>
        <dbReference type="ChEBI" id="CHEBI:29105"/>
    </ligand>
</feature>
<feature type="binding site" evidence="1">
    <location>
        <position position="683"/>
    </location>
    <ligand>
        <name>Zn(2+)</name>
        <dbReference type="ChEBI" id="CHEBI:29105"/>
    </ligand>
</feature>
<feature type="binding site" evidence="1">
    <location>
        <position position="687"/>
    </location>
    <ligand>
        <name>Zn(2+)</name>
        <dbReference type="ChEBI" id="CHEBI:29105"/>
    </ligand>
</feature>
<protein>
    <recommendedName>
        <fullName evidence="1">Alanine--tRNA ligase</fullName>
        <ecNumber evidence="1">6.1.1.7</ecNumber>
    </recommendedName>
    <alternativeName>
        <fullName evidence="1">Alanyl-tRNA synthetase</fullName>
        <shortName evidence="1">AlaRS</shortName>
    </alternativeName>
</protein>
<gene>
    <name evidence="1" type="primary">alaS</name>
    <name type="ordered locus">Erum1500</name>
    <name type="ordered locus">ERWE_CDS_01460</name>
</gene>
<evidence type="ECO:0000255" key="1">
    <source>
        <dbReference type="HAMAP-Rule" id="MF_00036"/>
    </source>
</evidence>
<accession>Q5HC27</accession>
<accession>Q5FCT7</accession>
<comment type="function">
    <text evidence="1">Catalyzes the attachment of alanine to tRNA(Ala) in a two-step reaction: alanine is first activated by ATP to form Ala-AMP and then transferred to the acceptor end of tRNA(Ala). Also edits incorrectly charged Ser-tRNA(Ala) and Gly-tRNA(Ala) via its editing domain.</text>
</comment>
<comment type="catalytic activity">
    <reaction evidence="1">
        <text>tRNA(Ala) + L-alanine + ATP = L-alanyl-tRNA(Ala) + AMP + diphosphate</text>
        <dbReference type="Rhea" id="RHEA:12540"/>
        <dbReference type="Rhea" id="RHEA-COMP:9657"/>
        <dbReference type="Rhea" id="RHEA-COMP:9923"/>
        <dbReference type="ChEBI" id="CHEBI:30616"/>
        <dbReference type="ChEBI" id="CHEBI:33019"/>
        <dbReference type="ChEBI" id="CHEBI:57972"/>
        <dbReference type="ChEBI" id="CHEBI:78442"/>
        <dbReference type="ChEBI" id="CHEBI:78497"/>
        <dbReference type="ChEBI" id="CHEBI:456215"/>
        <dbReference type="EC" id="6.1.1.7"/>
    </reaction>
</comment>
<comment type="cofactor">
    <cofactor evidence="1">
        <name>Zn(2+)</name>
        <dbReference type="ChEBI" id="CHEBI:29105"/>
    </cofactor>
    <text evidence="1">Binds 1 zinc ion per subunit.</text>
</comment>
<comment type="subcellular location">
    <subcellularLocation>
        <location evidence="1">Cytoplasm</location>
    </subcellularLocation>
</comment>
<comment type="domain">
    <text evidence="1">Consists of three domains; the N-terminal catalytic domain, the editing domain and the C-terminal C-Ala domain. The editing domain removes incorrectly charged amino acids, while the C-Ala domain, along with tRNA(Ala), serves as a bridge to cooperatively bring together the editing and aminoacylation centers thus stimulating deacylation of misacylated tRNAs.</text>
</comment>
<comment type="similarity">
    <text evidence="1">Belongs to the class-II aminoacyl-tRNA synthetase family.</text>
</comment>
<keyword id="KW-0030">Aminoacyl-tRNA synthetase</keyword>
<keyword id="KW-0067">ATP-binding</keyword>
<keyword id="KW-0963">Cytoplasm</keyword>
<keyword id="KW-0436">Ligase</keyword>
<keyword id="KW-0479">Metal-binding</keyword>
<keyword id="KW-0547">Nucleotide-binding</keyword>
<keyword id="KW-0648">Protein biosynthesis</keyword>
<keyword id="KW-0694">RNA-binding</keyword>
<keyword id="KW-0820">tRNA-binding</keyword>
<keyword id="KW-0862">Zinc</keyword>
<reference key="1">
    <citation type="journal article" date="2005" name="Proc. Natl. Acad. Sci. U.S.A.">
        <title>The genome of the heartwater agent Ehrlichia ruminantium contains multiple tandem repeats of actively variable copy number.</title>
        <authorList>
            <person name="Collins N.E."/>
            <person name="Liebenberg J."/>
            <person name="de Villiers E.P."/>
            <person name="Brayton K.A."/>
            <person name="Louw E."/>
            <person name="Pretorius A."/>
            <person name="Faber F.E."/>
            <person name="van Heerden H."/>
            <person name="Josemans A."/>
            <person name="van Kleef M."/>
            <person name="Steyn H.C."/>
            <person name="van Strijp M.F."/>
            <person name="Zweygarth E."/>
            <person name="Jongejan F."/>
            <person name="Maillard J.C."/>
            <person name="Berthier D."/>
            <person name="Botha M."/>
            <person name="Joubert F."/>
            <person name="Corton C.H."/>
            <person name="Thomson N.R."/>
            <person name="Allsopp M.T."/>
            <person name="Allsopp B.A."/>
        </authorList>
    </citation>
    <scope>NUCLEOTIDE SEQUENCE [LARGE SCALE GENOMIC DNA]</scope>
    <source>
        <strain>Welgevonden</strain>
    </source>
</reference>
<reference key="2">
    <citation type="journal article" date="2006" name="J. Bacteriol.">
        <title>Comparative genomic analysis of three strains of Ehrlichia ruminantium reveals an active process of genome size plasticity.</title>
        <authorList>
            <person name="Frutos R."/>
            <person name="Viari A."/>
            <person name="Ferraz C."/>
            <person name="Morgat A."/>
            <person name="Eychenie S."/>
            <person name="Kandassamy Y."/>
            <person name="Chantal I."/>
            <person name="Bensaid A."/>
            <person name="Coissac E."/>
            <person name="Vachiery N."/>
            <person name="Demaille J."/>
            <person name="Martinez D."/>
        </authorList>
    </citation>
    <scope>NUCLEOTIDE SEQUENCE [LARGE SCALE GENOMIC DNA]</scope>
    <source>
        <strain>Welgevonden</strain>
    </source>
</reference>